<sequence length="89" mass="10318">MALTQEAKNQIIKEYARHNGDTGSVEVQVAVLTADINELNNHMSENKHDFSSQRGLMKKIGHRRNLLRYLRDIDVARYRTLISKLGLRR</sequence>
<name>RS15_OENOB</name>
<comment type="function">
    <text evidence="1">One of the primary rRNA binding proteins, it binds directly to 16S rRNA where it helps nucleate assembly of the platform of the 30S subunit by binding and bridging several RNA helices of the 16S rRNA.</text>
</comment>
<comment type="function">
    <text evidence="1">Forms an intersubunit bridge (bridge B4) with the 23S rRNA of the 50S subunit in the ribosome.</text>
</comment>
<comment type="subunit">
    <text evidence="1">Part of the 30S ribosomal subunit. Forms a bridge to the 50S subunit in the 70S ribosome, contacting the 23S rRNA.</text>
</comment>
<comment type="similarity">
    <text evidence="1">Belongs to the universal ribosomal protein uS15 family.</text>
</comment>
<protein>
    <recommendedName>
        <fullName evidence="1">Small ribosomal subunit protein uS15</fullName>
    </recommendedName>
    <alternativeName>
        <fullName evidence="2">30S ribosomal protein S15</fullName>
    </alternativeName>
</protein>
<proteinExistence type="inferred from homology"/>
<gene>
    <name evidence="1" type="primary">rpsO</name>
    <name type="ordered locus">OEOE_1283</name>
</gene>
<keyword id="KW-1185">Reference proteome</keyword>
<keyword id="KW-0687">Ribonucleoprotein</keyword>
<keyword id="KW-0689">Ribosomal protein</keyword>
<keyword id="KW-0694">RNA-binding</keyword>
<keyword id="KW-0699">rRNA-binding</keyword>
<evidence type="ECO:0000255" key="1">
    <source>
        <dbReference type="HAMAP-Rule" id="MF_01343"/>
    </source>
</evidence>
<evidence type="ECO:0000305" key="2"/>
<organism>
    <name type="scientific">Oenococcus oeni (strain ATCC BAA-331 / PSU-1)</name>
    <dbReference type="NCBI Taxonomy" id="203123"/>
    <lineage>
        <taxon>Bacteria</taxon>
        <taxon>Bacillati</taxon>
        <taxon>Bacillota</taxon>
        <taxon>Bacilli</taxon>
        <taxon>Lactobacillales</taxon>
        <taxon>Lactobacillaceae</taxon>
        <taxon>Oenococcus</taxon>
    </lineage>
</organism>
<feature type="chain" id="PRO_1000054830" description="Small ribosomal subunit protein uS15">
    <location>
        <begin position="1"/>
        <end position="89"/>
    </location>
</feature>
<dbReference type="EMBL" id="CP000411">
    <property type="protein sequence ID" value="ABJ57156.1"/>
    <property type="molecule type" value="Genomic_DNA"/>
</dbReference>
<dbReference type="RefSeq" id="WP_002816946.1">
    <property type="nucleotide sequence ID" value="NC_008528.1"/>
</dbReference>
<dbReference type="SMR" id="Q04EG6"/>
<dbReference type="STRING" id="203123.OEOE_1283"/>
<dbReference type="GeneID" id="75065614"/>
<dbReference type="KEGG" id="ooe:OEOE_1283"/>
<dbReference type="eggNOG" id="COG0184">
    <property type="taxonomic scope" value="Bacteria"/>
</dbReference>
<dbReference type="HOGENOM" id="CLU_148518_0_0_9"/>
<dbReference type="Proteomes" id="UP000000774">
    <property type="component" value="Chromosome"/>
</dbReference>
<dbReference type="GO" id="GO:0022627">
    <property type="term" value="C:cytosolic small ribosomal subunit"/>
    <property type="evidence" value="ECO:0007669"/>
    <property type="project" value="TreeGrafter"/>
</dbReference>
<dbReference type="GO" id="GO:0019843">
    <property type="term" value="F:rRNA binding"/>
    <property type="evidence" value="ECO:0007669"/>
    <property type="project" value="UniProtKB-UniRule"/>
</dbReference>
<dbReference type="GO" id="GO:0003735">
    <property type="term" value="F:structural constituent of ribosome"/>
    <property type="evidence" value="ECO:0007669"/>
    <property type="project" value="InterPro"/>
</dbReference>
<dbReference type="GO" id="GO:0006412">
    <property type="term" value="P:translation"/>
    <property type="evidence" value="ECO:0007669"/>
    <property type="project" value="UniProtKB-UniRule"/>
</dbReference>
<dbReference type="CDD" id="cd00353">
    <property type="entry name" value="Ribosomal_S15p_S13e"/>
    <property type="match status" value="1"/>
</dbReference>
<dbReference type="FunFam" id="1.10.287.10:FF:000002">
    <property type="entry name" value="30S ribosomal protein S15"/>
    <property type="match status" value="1"/>
</dbReference>
<dbReference type="Gene3D" id="6.10.250.3130">
    <property type="match status" value="1"/>
</dbReference>
<dbReference type="Gene3D" id="1.10.287.10">
    <property type="entry name" value="S15/NS1, RNA-binding"/>
    <property type="match status" value="1"/>
</dbReference>
<dbReference type="HAMAP" id="MF_01343_B">
    <property type="entry name" value="Ribosomal_uS15_B"/>
    <property type="match status" value="1"/>
</dbReference>
<dbReference type="InterPro" id="IPR000589">
    <property type="entry name" value="Ribosomal_uS15"/>
</dbReference>
<dbReference type="InterPro" id="IPR005290">
    <property type="entry name" value="Ribosomal_uS15_bac-type"/>
</dbReference>
<dbReference type="InterPro" id="IPR009068">
    <property type="entry name" value="uS15_NS1_RNA-bd_sf"/>
</dbReference>
<dbReference type="NCBIfam" id="TIGR00952">
    <property type="entry name" value="S15_bact"/>
    <property type="match status" value="1"/>
</dbReference>
<dbReference type="PANTHER" id="PTHR23321">
    <property type="entry name" value="RIBOSOMAL PROTEIN S15, BACTERIAL AND ORGANELLAR"/>
    <property type="match status" value="1"/>
</dbReference>
<dbReference type="PANTHER" id="PTHR23321:SF26">
    <property type="entry name" value="SMALL RIBOSOMAL SUBUNIT PROTEIN US15M"/>
    <property type="match status" value="1"/>
</dbReference>
<dbReference type="Pfam" id="PF00312">
    <property type="entry name" value="Ribosomal_S15"/>
    <property type="match status" value="1"/>
</dbReference>
<dbReference type="SMART" id="SM01387">
    <property type="entry name" value="Ribosomal_S15"/>
    <property type="match status" value="1"/>
</dbReference>
<dbReference type="SUPFAM" id="SSF47060">
    <property type="entry name" value="S15/NS1 RNA-binding domain"/>
    <property type="match status" value="1"/>
</dbReference>
<dbReference type="PROSITE" id="PS00362">
    <property type="entry name" value="RIBOSOMAL_S15"/>
    <property type="match status" value="1"/>
</dbReference>
<accession>Q04EG6</accession>
<reference key="1">
    <citation type="journal article" date="2006" name="Proc. Natl. Acad. Sci. U.S.A.">
        <title>Comparative genomics of the lactic acid bacteria.</title>
        <authorList>
            <person name="Makarova K.S."/>
            <person name="Slesarev A."/>
            <person name="Wolf Y.I."/>
            <person name="Sorokin A."/>
            <person name="Mirkin B."/>
            <person name="Koonin E.V."/>
            <person name="Pavlov A."/>
            <person name="Pavlova N."/>
            <person name="Karamychev V."/>
            <person name="Polouchine N."/>
            <person name="Shakhova V."/>
            <person name="Grigoriev I."/>
            <person name="Lou Y."/>
            <person name="Rohksar D."/>
            <person name="Lucas S."/>
            <person name="Huang K."/>
            <person name="Goodstein D.M."/>
            <person name="Hawkins T."/>
            <person name="Plengvidhya V."/>
            <person name="Welker D."/>
            <person name="Hughes J."/>
            <person name="Goh Y."/>
            <person name="Benson A."/>
            <person name="Baldwin K."/>
            <person name="Lee J.-H."/>
            <person name="Diaz-Muniz I."/>
            <person name="Dosti B."/>
            <person name="Smeianov V."/>
            <person name="Wechter W."/>
            <person name="Barabote R."/>
            <person name="Lorca G."/>
            <person name="Altermann E."/>
            <person name="Barrangou R."/>
            <person name="Ganesan B."/>
            <person name="Xie Y."/>
            <person name="Rawsthorne H."/>
            <person name="Tamir D."/>
            <person name="Parker C."/>
            <person name="Breidt F."/>
            <person name="Broadbent J.R."/>
            <person name="Hutkins R."/>
            <person name="O'Sullivan D."/>
            <person name="Steele J."/>
            <person name="Unlu G."/>
            <person name="Saier M.H. Jr."/>
            <person name="Klaenhammer T."/>
            <person name="Richardson P."/>
            <person name="Kozyavkin S."/>
            <person name="Weimer B.C."/>
            <person name="Mills D.A."/>
        </authorList>
    </citation>
    <scope>NUCLEOTIDE SEQUENCE [LARGE SCALE GENOMIC DNA]</scope>
    <source>
        <strain>ATCC BAA-331 / PSU-1</strain>
    </source>
</reference>